<accession>P0DPC2</accession>
<dbReference type="SMR" id="P0DPC2"/>
<dbReference type="GO" id="GO:0005576">
    <property type="term" value="C:extracellular region"/>
    <property type="evidence" value="ECO:0007669"/>
    <property type="project" value="UniProtKB-SubCell"/>
</dbReference>
<dbReference type="GO" id="GO:0019855">
    <property type="term" value="F:calcium channel inhibitor activity"/>
    <property type="evidence" value="ECO:0000314"/>
    <property type="project" value="UniProtKB"/>
</dbReference>
<dbReference type="GO" id="GO:0019871">
    <property type="term" value="F:sodium channel inhibitor activity"/>
    <property type="evidence" value="ECO:0000314"/>
    <property type="project" value="UniProtKB"/>
</dbReference>
<dbReference type="GO" id="GO:0090729">
    <property type="term" value="F:toxin activity"/>
    <property type="evidence" value="ECO:0000314"/>
    <property type="project" value="UniProtKB"/>
</dbReference>
<dbReference type="InterPro" id="IPR011696">
    <property type="entry name" value="Huwentoxin-1"/>
</dbReference>
<dbReference type="Pfam" id="PF07740">
    <property type="entry name" value="Toxin_12"/>
    <property type="match status" value="1"/>
</dbReference>
<dbReference type="SUPFAM" id="SSF57059">
    <property type="entry name" value="omega toxin-like"/>
    <property type="match status" value="1"/>
</dbReference>
<keyword id="KW-0027">Amidation</keyword>
<keyword id="KW-0108">Calcium channel impairing toxin</keyword>
<keyword id="KW-0903">Direct protein sequencing</keyword>
<keyword id="KW-1015">Disulfide bond</keyword>
<keyword id="KW-0872">Ion channel impairing toxin</keyword>
<keyword id="KW-0960">Knottin</keyword>
<keyword id="KW-0528">Neurotoxin</keyword>
<keyword id="KW-0964">Secreted</keyword>
<keyword id="KW-0800">Toxin</keyword>
<keyword id="KW-1218">Voltage-gated calcium channel impairing toxin</keyword>
<keyword id="KW-0738">Voltage-gated sodium channel impairing toxin</keyword>
<evidence type="ECO:0000250" key="1">
    <source>
        <dbReference type="UniProtKB" id="P83476"/>
    </source>
</evidence>
<evidence type="ECO:0000250" key="2">
    <source>
        <dbReference type="UniProtKB" id="P83480"/>
    </source>
</evidence>
<evidence type="ECO:0000269" key="3">
    <source>
    </source>
</evidence>
<evidence type="ECO:0000303" key="4">
    <source>
    </source>
</evidence>
<evidence type="ECO:0000305" key="5"/>
<organism>
    <name type="scientific">Davus fasciatus</name>
    <name type="common">Costa Rican tiger rump</name>
    <name type="synonym">Cyclosternum fasciatus</name>
    <dbReference type="NCBI Taxonomy" id="2024242"/>
    <lineage>
        <taxon>Eukaryota</taxon>
        <taxon>Metazoa</taxon>
        <taxon>Ecdysozoa</taxon>
        <taxon>Arthropoda</taxon>
        <taxon>Chelicerata</taxon>
        <taxon>Arachnida</taxon>
        <taxon>Araneae</taxon>
        <taxon>Mygalomorphae</taxon>
        <taxon>Theraphosidae</taxon>
        <taxon>Davus</taxon>
    </lineage>
</organism>
<proteinExistence type="evidence at protein level"/>
<name>TXDF1_DAFVA</name>
<feature type="chain" id="PRO_0000442773" description="Mu-theraphotoxin-Df1a" evidence="3">
    <location>
        <begin position="1"/>
        <end position="34"/>
    </location>
</feature>
<feature type="modified residue" description="Phenylalanine amide" evidence="3">
    <location>
        <position position="34"/>
    </location>
</feature>
<feature type="disulfide bond" evidence="1">
    <location>
        <begin position="2"/>
        <end position="16"/>
    </location>
</feature>
<feature type="disulfide bond" evidence="1">
    <location>
        <begin position="9"/>
        <end position="21"/>
    </location>
</feature>
<feature type="disulfide bond" evidence="1">
    <location>
        <begin position="15"/>
        <end position="28"/>
    </location>
</feature>
<reference key="1">
    <citation type="journal article" date="2017" name="Br. J. Pharmacol.">
        <title>Modulatory features of the novel spider toxin mu-TRTX-Df1a isolated from the venom of the spider Davus fasciatus.</title>
        <authorList>
            <person name="Cardoso F.C."/>
            <person name="Dekan Z."/>
            <person name="Smith J.J."/>
            <person name="Deuis J.R."/>
            <person name="Vetter I."/>
            <person name="Herzig V."/>
            <person name="Alewood P.F."/>
            <person name="King G.F."/>
            <person name="Lewis R.J."/>
        </authorList>
    </citation>
    <scope>PROTEIN SEQUENCE</scope>
    <scope>FUNCTION</scope>
    <scope>SUBCELLULAR LOCATION</scope>
    <scope>MASS SPECTROMETRY</scope>
    <scope>AMIDATION AT PHE-34</scope>
</reference>
<protein>
    <recommendedName>
        <fullName evidence="4">Mu-theraphotoxin-Df1a</fullName>
        <shortName evidence="4">Mu-TRTX-Df1a</shortName>
    </recommendedName>
</protein>
<sequence>ECRWFLGGCSGGQTCCEHLVCHRKHQWCVWDWSF</sequence>
<comment type="function">
    <text evidence="3">Inhibits sodium channel Nav1.7/SCN9A with high potency (IC(50)=117 nM) and Nav1.2/SCN2A, Nav1.3/SCN3A, Nav1.6/SCN8A and Nav1.5/SCN5 with weaker potency. Also inhibits voltage-gated calcium channel Cav3.1/CACNA1G, Cav3.2/CACNA1H and Cav3.3/CACNA1I.</text>
</comment>
<comment type="subcellular location">
    <subcellularLocation>
        <location evidence="3">Secreted</location>
    </subcellularLocation>
</comment>
<comment type="tissue specificity">
    <text evidence="3">Expressed by the venom gland.</text>
</comment>
<comment type="domain">
    <text evidence="2">The presence of a 'disulfide through disulfide knot' structurally defines this protein as a knottin.</text>
</comment>
<comment type="PTM">
    <text evidence="3">C-terminal amidation is important for the high potency of the toxin.</text>
</comment>
<comment type="mass spectrometry"/>
<comment type="miscellaneous">
    <text evidence="3">Negative results: does not show activity on voltage-gated potassium channels (Kv).</text>
</comment>
<comment type="similarity">
    <text evidence="5">Belongs to the neurotoxin 10 (Hwtx-1) family. 54 (ProTx-1) subfamily.</text>
</comment>